<dbReference type="EMBL" id="BX284603">
    <property type="protein sequence ID" value="CCD71234.1"/>
    <property type="molecule type" value="Genomic_DNA"/>
</dbReference>
<dbReference type="PIR" id="S44824">
    <property type="entry name" value="S44824"/>
</dbReference>
<dbReference type="RefSeq" id="NP_498948.1">
    <property type="nucleotide sequence ID" value="NM_066547.5"/>
</dbReference>
<dbReference type="SMR" id="P34446"/>
<dbReference type="BioGRID" id="41442">
    <property type="interactions" value="7"/>
</dbReference>
<dbReference type="FunCoup" id="P34446">
    <property type="interactions" value="1217"/>
</dbReference>
<dbReference type="STRING" id="6239.F54F2.1.1"/>
<dbReference type="GlyCosmos" id="P34446">
    <property type="glycosylation" value="7 sites, No reported glycans"/>
</dbReference>
<dbReference type="iPTMnet" id="P34446"/>
<dbReference type="PaxDb" id="6239-F54F2.1"/>
<dbReference type="PeptideAtlas" id="P34446"/>
<dbReference type="EnsemblMetazoa" id="F54F2.1.1">
    <property type="protein sequence ID" value="F54F2.1.1"/>
    <property type="gene ID" value="WBGene00003929"/>
</dbReference>
<dbReference type="GeneID" id="176240"/>
<dbReference type="KEGG" id="cel:CELE_F54F2.1"/>
<dbReference type="UCSC" id="F54F2.1">
    <property type="organism name" value="c. elegans"/>
</dbReference>
<dbReference type="AGR" id="WB:WBGene00003929"/>
<dbReference type="CTD" id="176240"/>
<dbReference type="WormBase" id="F54F2.1">
    <property type="protein sequence ID" value="CE00194"/>
    <property type="gene ID" value="WBGene00003929"/>
    <property type="gene designation" value="pat-2"/>
</dbReference>
<dbReference type="eggNOG" id="KOG3637">
    <property type="taxonomic scope" value="Eukaryota"/>
</dbReference>
<dbReference type="GeneTree" id="ENSGT00940000169118"/>
<dbReference type="HOGENOM" id="CLU_004111_4_2_1"/>
<dbReference type="InParanoid" id="P34446"/>
<dbReference type="OMA" id="QVPCMLL"/>
<dbReference type="OrthoDB" id="5317514at2759"/>
<dbReference type="PhylomeDB" id="P34446"/>
<dbReference type="Reactome" id="R-CEL-114608">
    <property type="pathway name" value="Platelet degranulation"/>
</dbReference>
<dbReference type="Reactome" id="R-CEL-1236973">
    <property type="pathway name" value="Cross-presentation of particulate exogenous antigens (phagosomes)"/>
</dbReference>
<dbReference type="Reactome" id="R-CEL-1566977">
    <property type="pathway name" value="Fibronectin matrix formation"/>
</dbReference>
<dbReference type="Reactome" id="R-CEL-198933">
    <property type="pathway name" value="Immunoregulatory interactions between a Lymphoid and a non-Lymphoid cell"/>
</dbReference>
<dbReference type="Reactome" id="R-CEL-202733">
    <property type="pathway name" value="Cell surface interactions at the vascular wall"/>
</dbReference>
<dbReference type="Reactome" id="R-CEL-2129379">
    <property type="pathway name" value="Molecules associated with elastic fibres"/>
</dbReference>
<dbReference type="Reactome" id="R-CEL-216083">
    <property type="pathway name" value="Integrin cell surface interactions"/>
</dbReference>
<dbReference type="Reactome" id="R-CEL-2173789">
    <property type="pathway name" value="TGF-beta receptor signaling activates SMADs"/>
</dbReference>
<dbReference type="Reactome" id="R-CEL-3000170">
    <property type="pathway name" value="Syndecan interactions"/>
</dbReference>
<dbReference type="Reactome" id="R-CEL-3000178">
    <property type="pathway name" value="ECM proteoglycans"/>
</dbReference>
<dbReference type="Reactome" id="R-CEL-354192">
    <property type="pathway name" value="Integrin signaling"/>
</dbReference>
<dbReference type="Reactome" id="R-CEL-354194">
    <property type="pathway name" value="GRB2:SOS provides linkage to MAPK signaling for Integrins"/>
</dbReference>
<dbReference type="Reactome" id="R-CEL-4420097">
    <property type="pathway name" value="VEGFA-VEGFR2 Pathway"/>
</dbReference>
<dbReference type="Reactome" id="R-CEL-445144">
    <property type="pathway name" value="Signal transduction by L1"/>
</dbReference>
<dbReference type="Reactome" id="R-CEL-445355">
    <property type="pathway name" value="Smooth Muscle Contraction"/>
</dbReference>
<dbReference type="Reactome" id="R-CEL-5674135">
    <property type="pathway name" value="MAP2K and MAPK activation"/>
</dbReference>
<dbReference type="Reactome" id="R-CEL-6798695">
    <property type="pathway name" value="Neutrophil degranulation"/>
</dbReference>
<dbReference type="Reactome" id="R-CEL-8874081">
    <property type="pathway name" value="MET activates PTK2 signaling"/>
</dbReference>
<dbReference type="Reactome" id="R-CEL-9860927">
    <property type="pathway name" value="Turbulent (oscillatory, disturbed) flow shear stress activates signaling by PIEZO1 and integrins in endothelial cells"/>
</dbReference>
<dbReference type="PRO" id="PR:P34446"/>
<dbReference type="Proteomes" id="UP000001940">
    <property type="component" value="Chromosome III"/>
</dbReference>
<dbReference type="Bgee" id="WBGene00003929">
    <property type="expression patterns" value="Expressed in larva and 3 other cell types or tissues"/>
</dbReference>
<dbReference type="GO" id="GO:0009986">
    <property type="term" value="C:cell surface"/>
    <property type="evidence" value="ECO:0000314"/>
    <property type="project" value="WormBase"/>
</dbReference>
<dbReference type="GO" id="GO:0009897">
    <property type="term" value="C:external side of plasma membrane"/>
    <property type="evidence" value="ECO:0000318"/>
    <property type="project" value="GO_Central"/>
</dbReference>
<dbReference type="GO" id="GO:0008305">
    <property type="term" value="C:integrin complex"/>
    <property type="evidence" value="ECO:0000250"/>
    <property type="project" value="WormBase"/>
</dbReference>
<dbReference type="GO" id="GO:0031430">
    <property type="term" value="C:M band"/>
    <property type="evidence" value="ECO:0000314"/>
    <property type="project" value="WormBase"/>
</dbReference>
<dbReference type="GO" id="GO:0055120">
    <property type="term" value="C:striated muscle dense body"/>
    <property type="evidence" value="ECO:0000314"/>
    <property type="project" value="WormBase"/>
</dbReference>
<dbReference type="GO" id="GO:0005178">
    <property type="term" value="F:integrin binding"/>
    <property type="evidence" value="ECO:0000318"/>
    <property type="project" value="GO_Central"/>
</dbReference>
<dbReference type="GO" id="GO:0004888">
    <property type="term" value="F:transmembrane signaling receptor activity"/>
    <property type="evidence" value="ECO:0000314"/>
    <property type="project" value="WormBase"/>
</dbReference>
<dbReference type="GO" id="GO:0033627">
    <property type="term" value="P:cell adhesion mediated by integrin"/>
    <property type="evidence" value="ECO:0000318"/>
    <property type="project" value="GO_Central"/>
</dbReference>
<dbReference type="GO" id="GO:0098609">
    <property type="term" value="P:cell-cell adhesion"/>
    <property type="evidence" value="ECO:0000318"/>
    <property type="project" value="GO_Central"/>
</dbReference>
<dbReference type="GO" id="GO:0007229">
    <property type="term" value="P:integrin-mediated signaling pathway"/>
    <property type="evidence" value="ECO:0000318"/>
    <property type="project" value="GO_Central"/>
</dbReference>
<dbReference type="GO" id="GO:0007005">
    <property type="term" value="P:mitochondrion organization"/>
    <property type="evidence" value="ECO:0000315"/>
    <property type="project" value="UniProtKB"/>
</dbReference>
<dbReference type="GO" id="GO:0046716">
    <property type="term" value="P:muscle cell cellular homeostasis"/>
    <property type="evidence" value="ECO:0000315"/>
    <property type="project" value="UniProtKB"/>
</dbReference>
<dbReference type="GO" id="GO:0042059">
    <property type="term" value="P:negative regulation of epidermal growth factor receptor signaling pathway"/>
    <property type="evidence" value="ECO:0000315"/>
    <property type="project" value="UniProtKB"/>
</dbReference>
<dbReference type="GO" id="GO:1901076">
    <property type="term" value="P:positive regulation of engulfment of apoptotic cell"/>
    <property type="evidence" value="ECO:0000315"/>
    <property type="project" value="WormBase"/>
</dbReference>
<dbReference type="GO" id="GO:0040017">
    <property type="term" value="P:positive regulation of locomotion"/>
    <property type="evidence" value="ECO:0000315"/>
    <property type="project" value="UniProtKB"/>
</dbReference>
<dbReference type="GO" id="GO:0060298">
    <property type="term" value="P:positive regulation of sarcomere organization"/>
    <property type="evidence" value="ECO:0000315"/>
    <property type="project" value="UniProtKB"/>
</dbReference>
<dbReference type="GO" id="GO:1903354">
    <property type="term" value="P:regulation of distal tip cell migration"/>
    <property type="evidence" value="ECO:0000315"/>
    <property type="project" value="UniProtKB"/>
</dbReference>
<dbReference type="GO" id="GO:0040028">
    <property type="term" value="P:regulation of vulval development"/>
    <property type="evidence" value="ECO:0000316"/>
    <property type="project" value="UniProtKB"/>
</dbReference>
<dbReference type="GO" id="GO:0072327">
    <property type="term" value="P:vulval cell fate specification"/>
    <property type="evidence" value="ECO:0000316"/>
    <property type="project" value="UniProtKB"/>
</dbReference>
<dbReference type="FunFam" id="2.130.10.130:FF:000019">
    <property type="entry name" value="Integrin alpha pat-2"/>
    <property type="match status" value="1"/>
</dbReference>
<dbReference type="FunFam" id="2.60.40.1510:FF:000026">
    <property type="entry name" value="Integrin alpha pat-2"/>
    <property type="match status" value="1"/>
</dbReference>
<dbReference type="Gene3D" id="1.20.5.930">
    <property type="entry name" value="Bicelle-embedded integrin alpha(iib) transmembrane segment"/>
    <property type="match status" value="1"/>
</dbReference>
<dbReference type="Gene3D" id="2.130.10.130">
    <property type="entry name" value="Integrin alpha, N-terminal"/>
    <property type="match status" value="1"/>
</dbReference>
<dbReference type="Gene3D" id="2.60.40.1460">
    <property type="entry name" value="Integrin domains. Chain A, domain 2"/>
    <property type="match status" value="1"/>
</dbReference>
<dbReference type="Gene3D" id="2.60.40.1510">
    <property type="entry name" value="ntegrin, alpha v. Chain A, domain 3"/>
    <property type="match status" value="1"/>
</dbReference>
<dbReference type="Gene3D" id="2.60.40.1530">
    <property type="entry name" value="ntegrin, alpha v. Chain A, domain 4"/>
    <property type="match status" value="1"/>
</dbReference>
<dbReference type="InterPro" id="IPR013517">
    <property type="entry name" value="FG-GAP"/>
</dbReference>
<dbReference type="InterPro" id="IPR013519">
    <property type="entry name" value="Int_alpha_beta-p"/>
</dbReference>
<dbReference type="InterPro" id="IPR000413">
    <property type="entry name" value="Integrin_alpha"/>
</dbReference>
<dbReference type="InterPro" id="IPR018184">
    <property type="entry name" value="Integrin_alpha_C_CS"/>
</dbReference>
<dbReference type="InterPro" id="IPR013649">
    <property type="entry name" value="Integrin_alpha_Ig-like_1"/>
</dbReference>
<dbReference type="InterPro" id="IPR048285">
    <property type="entry name" value="Integrin_alpha_Ig-like_2"/>
</dbReference>
<dbReference type="InterPro" id="IPR048286">
    <property type="entry name" value="Integrin_alpha_Ig-like_3"/>
</dbReference>
<dbReference type="InterPro" id="IPR028994">
    <property type="entry name" value="Integrin_alpha_N"/>
</dbReference>
<dbReference type="InterPro" id="IPR032695">
    <property type="entry name" value="Integrin_dom_sf"/>
</dbReference>
<dbReference type="PANTHER" id="PTHR23220">
    <property type="entry name" value="INTEGRIN ALPHA"/>
    <property type="match status" value="1"/>
</dbReference>
<dbReference type="PANTHER" id="PTHR23220:SF133">
    <property type="entry name" value="INTEGRIN ALPHA-PS2"/>
    <property type="match status" value="1"/>
</dbReference>
<dbReference type="Pfam" id="PF01839">
    <property type="entry name" value="FG-GAP"/>
    <property type="match status" value="3"/>
</dbReference>
<dbReference type="Pfam" id="PF08441">
    <property type="entry name" value="Integrin_A_Ig_1"/>
    <property type="match status" value="1"/>
</dbReference>
<dbReference type="Pfam" id="PF20805">
    <property type="entry name" value="Integrin_A_Ig_2"/>
    <property type="match status" value="1"/>
</dbReference>
<dbReference type="Pfam" id="PF20806">
    <property type="entry name" value="Integrin_A_Ig_3"/>
    <property type="match status" value="1"/>
</dbReference>
<dbReference type="Pfam" id="PF00357">
    <property type="entry name" value="Integrin_alpha"/>
    <property type="match status" value="1"/>
</dbReference>
<dbReference type="PRINTS" id="PR01185">
    <property type="entry name" value="INTEGRINA"/>
</dbReference>
<dbReference type="SMART" id="SM00191">
    <property type="entry name" value="Int_alpha"/>
    <property type="match status" value="5"/>
</dbReference>
<dbReference type="SUPFAM" id="SSF69318">
    <property type="entry name" value="Integrin alpha N-terminal domain"/>
    <property type="match status" value="1"/>
</dbReference>
<dbReference type="SUPFAM" id="SSF69179">
    <property type="entry name" value="Integrin domains"/>
    <property type="match status" value="3"/>
</dbReference>
<dbReference type="PROSITE" id="PS51470">
    <property type="entry name" value="FG_GAP"/>
    <property type="match status" value="7"/>
</dbReference>
<dbReference type="PROSITE" id="PS00242">
    <property type="entry name" value="INTEGRIN_ALPHA"/>
    <property type="match status" value="1"/>
</dbReference>
<organism>
    <name type="scientific">Caenorhabditis elegans</name>
    <dbReference type="NCBI Taxonomy" id="6239"/>
    <lineage>
        <taxon>Eukaryota</taxon>
        <taxon>Metazoa</taxon>
        <taxon>Ecdysozoa</taxon>
        <taxon>Nematoda</taxon>
        <taxon>Chromadorea</taxon>
        <taxon>Rhabditida</taxon>
        <taxon>Rhabditina</taxon>
        <taxon>Rhabditomorpha</taxon>
        <taxon>Rhabditoidea</taxon>
        <taxon>Rhabditidae</taxon>
        <taxon>Peloderinae</taxon>
        <taxon>Caenorhabditis</taxon>
    </lineage>
</organism>
<accession>P34446</accession>
<protein>
    <recommendedName>
        <fullName>Integrin alpha pat-2</fullName>
    </recommendedName>
    <alternativeName>
        <fullName>Paralyzed arrest at two-fold protein 2</fullName>
    </alternativeName>
</protein>
<keyword id="KW-0130">Cell adhesion</keyword>
<keyword id="KW-0325">Glycoprotein</keyword>
<keyword id="KW-0401">Integrin</keyword>
<keyword id="KW-0472">Membrane</keyword>
<keyword id="KW-0675">Receptor</keyword>
<keyword id="KW-1185">Reference proteome</keyword>
<keyword id="KW-0677">Repeat</keyword>
<keyword id="KW-0732">Signal</keyword>
<keyword id="KW-0812">Transmembrane</keyword>
<keyword id="KW-1133">Transmembrane helix</keyword>
<sequence>MREGSFPRRIGLLLGLLGLLAGVATFNIDTKNVVVHHMAGNYFGYSLDFYHEQKGMPVLVVGAPEAESNNPNLAGIRRPGAVYACSVNRATCREVHVDKMKGNLKKLNGSHLVPIEEKSHQFFGATVRSNDKHDKIVVCAPKYTYFYSKFEVIEPVGTCFYAENGFDNAEEFSSCKQEPARHGRHRLGYGQCGFSAAVPGKKNQNRVFIGAPGVWYWQGAMFSQNIKNQTDRPNTEYGSKEYDHDMMGYSTATGDFDGDGIDDIVAGVPRGNDLHGKLVLYTSKLKMMINLTDEVSTQHGQYCGGSVAVADVNKDGRDDIIMGCPFYTDYGSVKDAKTQERKPQYDVGKVIVMLQTAPGVFGKQIAVVGDDQWGRFGHAVAAAGDLNLDGYNDVIVGAPYAGKNKQGAVYVIHGSKDGVRELPTQKIEGANIGHGNIKSFGFSLTGNEDVDGNGMPDIAVGAWKSGNAAVLLTKPVVTVTGQTEPESALISVEDKNCDVDGKLGKQACKHINTCFKYEGKGDTPNDLEFDLRFNLDDHSPEPRAYFLQKDVKSDRSIKVAQGSKTRDHPSSIEQRVRLEKGRQKCFRHRFFASSTMKDKLSPIHWSVNYTYVESKTGKLRGDKLEPAIDTTVPLSFQNKINIANNCGKDDLCVPDLKVTAVADREKFLLGTQDNTMLINVTVQNGGEDSYETKLYFDVPQGFEYGGIESVGGDGSKSAPACSPTSDEPDSDGKWTFACDLGNPLPANKVVSSVVRVTASSDKPPLAPISINAHVNSSNDEEAHTVADNKVTFTIPVDFKNQLSLNGRSNPEQVDFSMTNKTRVDAFDDNEIGPVVSHLYQISNRGPSEVDSATLDIFWPSFSTEGGHLLYIITEPVVNPPNKGRCRVKQLQNVNPLNLRITNEHVPTEPPVAKTPNEYSREEDDESYEDETTTQSQSTRHQSTQHQTHHQSGPVHVYEKDEEKIRQNTGNWQYVEDKKKKGDYEYIPDDQEYDGDDFEEEDDEDFDRAGSKRVKRNPTPKKKKKGGEHRGEPRSDKARFSDLREAVKLSKEAGGVVDYKGPLSRASVDCNSLRCTHIECDIYDLKEDEFVLVEIFSRLYTNTLVDEKNPGGDISSLALARVTSTKYNLPHKPTLITAVSTNMNAIASEEGRDLPWWLYLLAILIGLAILILLILLLWRCGFFKRNRPPTEHAELRADRQPNAQYADSQSRYTSQDQYNQGRHGQML</sequence>
<gene>
    <name evidence="16" type="primary">pat-2</name>
    <name evidence="16" type="ORF">F54F2.1</name>
</gene>
<reference key="1">
    <citation type="journal article" date="1994" name="Nature">
        <title>2.2 Mb of contiguous nucleotide sequence from chromosome III of C. elegans.</title>
        <authorList>
            <person name="Wilson R."/>
            <person name="Ainscough R."/>
            <person name="Anderson K."/>
            <person name="Baynes C."/>
            <person name="Berks M."/>
            <person name="Bonfield J."/>
            <person name="Burton J."/>
            <person name="Connell M."/>
            <person name="Copsey T."/>
            <person name="Cooper J."/>
            <person name="Coulson A."/>
            <person name="Craxton M."/>
            <person name="Dear S."/>
            <person name="Du Z."/>
            <person name="Durbin R."/>
            <person name="Favello A."/>
            <person name="Fraser A."/>
            <person name="Fulton L."/>
            <person name="Gardner A."/>
            <person name="Green P."/>
            <person name="Hawkins T."/>
            <person name="Hillier L."/>
            <person name="Jier M."/>
            <person name="Johnston L."/>
            <person name="Jones M."/>
            <person name="Kershaw J."/>
            <person name="Kirsten J."/>
            <person name="Laisster N."/>
            <person name="Latreille P."/>
            <person name="Lightning J."/>
            <person name="Lloyd C."/>
            <person name="Mortimore B."/>
            <person name="O'Callaghan M."/>
            <person name="Parsons J."/>
            <person name="Percy C."/>
            <person name="Rifken L."/>
            <person name="Roopra A."/>
            <person name="Saunders D."/>
            <person name="Shownkeen R."/>
            <person name="Sims M."/>
            <person name="Smaldon N."/>
            <person name="Smith A."/>
            <person name="Smith M."/>
            <person name="Sonnhammer E."/>
            <person name="Staden R."/>
            <person name="Sulston J."/>
            <person name="Thierry-Mieg J."/>
            <person name="Thomas K."/>
            <person name="Vaudin M."/>
            <person name="Vaughan K."/>
            <person name="Waterston R."/>
            <person name="Watson A."/>
            <person name="Weinstock L."/>
            <person name="Wilkinson-Sproat J."/>
            <person name="Wohldman P."/>
        </authorList>
    </citation>
    <scope>NUCLEOTIDE SEQUENCE [LARGE SCALE GENOMIC DNA]</scope>
    <source>
        <strain>Bristol N2</strain>
    </source>
</reference>
<reference key="2">
    <citation type="journal article" date="1998" name="Science">
        <title>Genome sequence of the nematode C. elegans: a platform for investigating biology.</title>
        <authorList>
            <consortium name="The C. elegans sequencing consortium"/>
        </authorList>
    </citation>
    <scope>NUCLEOTIDE SEQUENCE [LARGE SCALE GENOMIC DNA]</scope>
    <source>
        <strain>Bristol N2</strain>
    </source>
</reference>
<reference key="3">
    <citation type="journal article" date="1994" name="J. Cell Biol.">
        <title>Genes critical for muscle development and function in Caenorhabditis elegans identified through lethal mutations.</title>
        <authorList>
            <person name="Williams B.D."/>
            <person name="Waterston R.H."/>
        </authorList>
    </citation>
    <scope>FUNCTION</scope>
    <scope>DISRUPTION PHENOTYPE</scope>
    <scope>MUTAGENESIS OF GLY-441</scope>
</reference>
<reference key="4">
    <citation type="journal article" date="2003" name="J. Cell Sci.">
        <title>Talin loss-of-function uncovers roles in cell contractility and migration in C. elegans.</title>
        <authorList>
            <person name="Cram E.J."/>
            <person name="Clark S.G."/>
            <person name="Schwarzbauer J.E."/>
        </authorList>
    </citation>
    <scope>FUNCTION</scope>
    <scope>DISRUPTION PHENOTYPE</scope>
</reference>
<reference key="5">
    <citation type="journal article" date="2005" name="Glycobiology">
        <title>Identification of the hydrophobic glycoproteins of Caenorhabditis elegans.</title>
        <authorList>
            <person name="Fan X."/>
            <person name="She Y.-M."/>
            <person name="Bagshaw R.D."/>
            <person name="Callahan J.W."/>
            <person name="Schachter H."/>
            <person name="Mahuran D.J."/>
        </authorList>
    </citation>
    <scope>GLYCOSYLATION [LARGE SCALE ANALYSIS] AT ASN-108; ASN-228; ASN-290; ASN-608 AND ASN-819</scope>
    <scope>IDENTIFICATION BY MASS SPECTROMETRY</scope>
</reference>
<reference key="6">
    <citation type="journal article" date="2006" name="Development">
        <title>FGF negatively regulates muscle membrane extension in Caenorhabditis elegans.</title>
        <authorList>
            <person name="Dixon S.J."/>
            <person name="Alexander M."/>
            <person name="Fernandes R."/>
            <person name="Ricker N."/>
            <person name="Roy P.J."/>
        </authorList>
    </citation>
    <scope>FUNCTION</scope>
    <scope>DISRUPTION PHENOTYPE</scope>
</reference>
<reference key="7">
    <citation type="journal article" date="2007" name="Genes Dev.">
        <title>Control of C. elegans hermaphrodite gonad size and shape by vab-3/Pax6-mediated regulation of integrin receptors.</title>
        <authorList>
            <person name="Meighan C.M."/>
            <person name="Schwarzbauer J.E."/>
        </authorList>
    </citation>
    <scope>FUNCTION</scope>
    <scope>TISSUE SPECIFICITY</scope>
    <scope>DEVELOPMENTAL STAGE</scope>
    <scope>DISRUPTION PHENOTYPE</scope>
</reference>
<reference key="8">
    <citation type="journal article" date="2007" name="Mol. Cell. Proteomics">
        <title>Proteomics reveals N-linked glycoprotein diversity in Caenorhabditis elegans and suggests an atypical translocation mechanism for integral membrane proteins.</title>
        <authorList>
            <person name="Kaji H."/>
            <person name="Kamiie J."/>
            <person name="Kawakami H."/>
            <person name="Kido K."/>
            <person name="Yamauchi Y."/>
            <person name="Shinkawa T."/>
            <person name="Taoka M."/>
            <person name="Takahashi N."/>
            <person name="Isobe T."/>
        </authorList>
    </citation>
    <scope>GLYCOSYLATION [LARGE SCALE ANALYSIS] AT ASN-108; ASN-228; ASN-608; ASN-679 AND ASN-819</scope>
    <scope>IDENTIFICATION BY MASS SPECTROMETRY</scope>
    <source>
        <strain>Bristol N2</strain>
    </source>
</reference>
<reference key="9">
    <citation type="journal article" date="2012" name="PLoS Genet.">
        <title>Calpains mediate integrin attachment complex maintenance of adult muscle in Caenorhabditis elegans.</title>
        <authorList>
            <person name="Etheridge T."/>
            <person name="Oczypok E.A."/>
            <person name="Lehmann S."/>
            <person name="Fields B.D."/>
            <person name="Shephard F."/>
            <person name="Jacobson L.A."/>
            <person name="Szewczyk N.J."/>
        </authorList>
    </citation>
    <scope>FUNCTION</scope>
    <scope>COMPONENT OF AN INTEGRIN CONTAINING ATTACHMENT COMPLEX</scope>
    <scope>DISRUPTION PHENOTYPE</scope>
</reference>
<reference key="10">
    <citation type="journal article" date="2017" name="PLoS Genet.">
        <title>beta-Integrin de-phosphorylation by the density-enhanced phosphatase DEP-1 attenuates EGFR signaling in C. elegans.</title>
        <authorList>
            <person name="Walser M."/>
            <person name="Umbricht C.A."/>
            <person name="Froehli E."/>
            <person name="Nanni P."/>
            <person name="Hajnal A."/>
        </authorList>
    </citation>
    <scope>FUNCTION</scope>
    <scope>IDENTIFICATION BY MASS SPECTROMETRY</scope>
    <scope>INTERACTION WITH DEP-1</scope>
    <scope>DISRUPTION PHENOTYPE</scope>
</reference>
<proteinExistence type="evidence at protein level"/>
<name>PAT2_CAEEL</name>
<comment type="function">
    <text evidence="2 6 8 9 11 12 13">Required for muscle development probably through the regulation of the actin-myosin cytoskeleton (PubMed:12915588, PubMed:8106547). Component of an integrin containing attachment complex, which is required for muscle maintenance (PubMed:22253611). During the formation of neuromuscular junctions at the larval stage, negatively regulates membrane protrusion from body wall muscles, probably through lamins such as epi-1, lam-2 and unc-52 (PubMed:16495308). Required for distal tip cell migration and dorsal pathfinding (PubMed:17606640). Required for egg-laying (PubMed:12915588). May play a role in cell motility and cell-cell interactions (By similarity). Plays a role in vulval development (PubMed:28135265). Probably within the alpha pat-2/beta pat-3 integrin receptor complex, plays a role in the negative regulation of let-23 signaling and vulval induction. This is probably partly by restricting the mobility of the let-23 receptor on the plasma membrane of vulval cells which thereby attenuates let-23 signaling (PubMed:28135265).</text>
</comment>
<comment type="subunit">
    <text evidence="12 14 15">Heterodimer of an alpha and a beta subunit (Probable). Interacts with beta subunit pat-3 (Probable). Interacts with dep-1 (PubMed:28135265). Component of an integrin containing attachment complex, composed of at least pat-2, pat-3, pat-4, pat-6, unc-52, unc-97 and unc-112 (PubMed:22253611).</text>
</comment>
<comment type="subcellular location">
    <subcellularLocation>
        <location evidence="1">Membrane</location>
        <topology evidence="1">Single-pass type I membrane protein</topology>
    </subcellularLocation>
</comment>
<comment type="tissue specificity">
    <text evidence="9">Expressed in body-wall muscle cells, distal tip cells, and vulval tissue.</text>
</comment>
<comment type="developmental stage">
    <text evidence="9">Up-regulated during L3 developmental stage in distal tip cells.</text>
</comment>
<comment type="disruption phenotype">
    <text evidence="6 8 9 11 12 13">Severe paralysis at the 1-fold stage of embryonic development followed by an arrest in elongation at 2-fold stage (PubMed:8106547). Loss of myosin and actin organization in embryonic body wall muscles and loss of muscle cell polarization (PubMed:8106547). RNAi-mediated knockdown in post-hatching animals causes paralysis associated with severe disorganization of body wall muscle actin filaments and defects in egg-laying associated with embryonic hatching within the mother (the bag of worms phenotype) (PubMed:12915588). Few surviving adults, are uncoordinated with abnormal body size and shape and have defects in distal tip cells (DTC) migration resulting in abnormal gonad formation (PubMed:17606640). RNAi-mediated knockdown in L4 larval stage, causes ectopic membrane extensions from body wall muscles (PubMed:16495308). RNAi-mediated knockdown results in impaired mobility, mitochondrial fragmentation and disrupted integrin attachment complexes in muscle (PubMed:22253611). This leads to degradation of muscle proteins in the cytosol, myofibrillar defects and disruption of sarcomere organization (PubMed:22253611). RNAi-mediated knockdown in vulval precursor cells in a let-60 gain of function mutant background results in increased vulval induction and an adjacent primary fate (Apf) phenotype whereby secondary vulval precursor cells transform into primary-like vulval cells (PubMed:28135265).</text>
</comment>
<comment type="similarity">
    <text evidence="14">Belongs to the integrin alpha chain family.</text>
</comment>
<evidence type="ECO:0000250" key="1"/>
<evidence type="ECO:0000250" key="2">
    <source>
        <dbReference type="UniProtKB" id="P53708"/>
    </source>
</evidence>
<evidence type="ECO:0000255" key="3"/>
<evidence type="ECO:0000255" key="4">
    <source>
        <dbReference type="PROSITE-ProRule" id="PRU00803"/>
    </source>
</evidence>
<evidence type="ECO:0000256" key="5">
    <source>
        <dbReference type="SAM" id="MobiDB-lite"/>
    </source>
</evidence>
<evidence type="ECO:0000269" key="6">
    <source>
    </source>
</evidence>
<evidence type="ECO:0000269" key="7">
    <source>
    </source>
</evidence>
<evidence type="ECO:0000269" key="8">
    <source>
    </source>
</evidence>
<evidence type="ECO:0000269" key="9">
    <source>
    </source>
</evidence>
<evidence type="ECO:0000269" key="10">
    <source>
    </source>
</evidence>
<evidence type="ECO:0000269" key="11">
    <source>
    </source>
</evidence>
<evidence type="ECO:0000269" key="12">
    <source>
    </source>
</evidence>
<evidence type="ECO:0000269" key="13">
    <source>
    </source>
</evidence>
<evidence type="ECO:0000305" key="14"/>
<evidence type="ECO:0000305" key="15">
    <source>
    </source>
</evidence>
<evidence type="ECO:0000312" key="16">
    <source>
        <dbReference type="WormBase" id="F54F2.1"/>
    </source>
</evidence>
<feature type="signal peptide" evidence="3">
    <location>
        <begin position="1"/>
        <end position="25"/>
    </location>
</feature>
<feature type="chain" id="PRO_0000016332" description="Integrin alpha pat-2">
    <location>
        <begin position="26"/>
        <end position="1226"/>
    </location>
</feature>
<feature type="topological domain" description="Extracellular" evidence="3">
    <location>
        <begin position="26"/>
        <end position="1154"/>
    </location>
</feature>
<feature type="transmembrane region" description="Helical" evidence="3">
    <location>
        <begin position="1155"/>
        <end position="1177"/>
    </location>
</feature>
<feature type="topological domain" description="Cytoplasmic" evidence="3">
    <location>
        <begin position="1178"/>
        <end position="1226"/>
    </location>
</feature>
<feature type="repeat" description="FG-GAP 1" evidence="4">
    <location>
        <begin position="27"/>
        <end position="94"/>
    </location>
</feature>
<feature type="repeat" description="FG-GAP 2" evidence="4">
    <location>
        <begin position="108"/>
        <end position="171"/>
    </location>
</feature>
<feature type="repeat" description="FG-GAP 3" evidence="4">
    <location>
        <begin position="178"/>
        <end position="233"/>
    </location>
</feature>
<feature type="repeat" description="FG-GAP 4" evidence="4">
    <location>
        <begin position="234"/>
        <end position="290"/>
    </location>
</feature>
<feature type="repeat" description="FG-GAP 5" evidence="4">
    <location>
        <begin position="291"/>
        <end position="345"/>
    </location>
</feature>
<feature type="repeat" description="FG-GAP 6" evidence="4">
    <location>
        <begin position="362"/>
        <end position="421"/>
    </location>
</feature>
<feature type="repeat" description="FG-GAP 7" evidence="4">
    <location>
        <begin position="425"/>
        <end position="488"/>
    </location>
</feature>
<feature type="region of interest" description="Disordered" evidence="5">
    <location>
        <begin position="709"/>
        <end position="733"/>
    </location>
</feature>
<feature type="region of interest" description="Disordered" evidence="5">
    <location>
        <begin position="898"/>
        <end position="958"/>
    </location>
</feature>
<feature type="region of interest" description="Disordered" evidence="5">
    <location>
        <begin position="982"/>
        <end position="1040"/>
    </location>
</feature>
<feature type="region of interest" description="Disordered" evidence="5">
    <location>
        <begin position="1191"/>
        <end position="1226"/>
    </location>
</feature>
<feature type="short sequence motif" description="Cell attachment site" evidence="3">
    <location>
        <begin position="620"/>
        <end position="622"/>
    </location>
</feature>
<feature type="compositionally biased region" description="Acidic residues" evidence="5">
    <location>
        <begin position="920"/>
        <end position="931"/>
    </location>
</feature>
<feature type="compositionally biased region" description="Low complexity" evidence="5">
    <location>
        <begin position="932"/>
        <end position="951"/>
    </location>
</feature>
<feature type="compositionally biased region" description="Acidic residues" evidence="5">
    <location>
        <begin position="985"/>
        <end position="1005"/>
    </location>
</feature>
<feature type="compositionally biased region" description="Basic residues" evidence="5">
    <location>
        <begin position="1010"/>
        <end position="1026"/>
    </location>
</feature>
<feature type="compositionally biased region" description="Basic and acidic residues" evidence="5">
    <location>
        <begin position="1027"/>
        <end position="1040"/>
    </location>
</feature>
<feature type="compositionally biased region" description="Polar residues" evidence="5">
    <location>
        <begin position="1200"/>
        <end position="1226"/>
    </location>
</feature>
<feature type="glycosylation site" description="N-linked (GlcNAc...) asparagine" evidence="7 10">
    <location>
        <position position="108"/>
    </location>
</feature>
<feature type="glycosylation site" description="N-linked (GlcNAc...) asparagine" evidence="7 10">
    <location>
        <position position="228"/>
    </location>
</feature>
<feature type="glycosylation site" description="N-linked (GlcNAc...) asparagine" evidence="7">
    <location>
        <position position="290"/>
    </location>
</feature>
<feature type="glycosylation site" description="N-linked (GlcNAc...) asparagine" evidence="7 10">
    <location>
        <position position="608"/>
    </location>
</feature>
<feature type="glycosylation site" description="N-linked (GlcNAc...) asparagine" evidence="10">
    <location>
        <position position="679"/>
    </location>
</feature>
<feature type="glycosylation site" description="N-linked (GlcNAc...) asparagine" evidence="3">
    <location>
        <position position="775"/>
    </location>
</feature>
<feature type="glycosylation site" description="N-linked (GlcNAc...) asparagine" evidence="7 10">
    <location>
        <position position="819"/>
    </location>
</feature>
<feature type="mutagenesis site" description="In st567; severe paralysis at embryonic 1-fold stage followed by an arrest in elongation at 2-fold stage. Loss of myosin and actin organization in embryonic muscles." evidence="13">
    <original>G</original>
    <variation>D</variation>
    <location>
        <position position="441"/>
    </location>
</feature>